<reference key="1">
    <citation type="journal article" date="2000" name="Nature">
        <title>The complete sequence of the mucosal pathogen Ureaplasma urealyticum.</title>
        <authorList>
            <person name="Glass J.I."/>
            <person name="Lefkowitz E.J."/>
            <person name="Glass J.S."/>
            <person name="Heiner C.R."/>
            <person name="Chen E.Y."/>
            <person name="Cassell G.H."/>
        </authorList>
    </citation>
    <scope>NUCLEOTIDE SEQUENCE [LARGE SCALE GENOMIC DNA]</scope>
    <source>
        <strain>ATCC 700970</strain>
    </source>
</reference>
<organism>
    <name type="scientific">Ureaplasma parvum serovar 3 (strain ATCC 700970)</name>
    <dbReference type="NCBI Taxonomy" id="273119"/>
    <lineage>
        <taxon>Bacteria</taxon>
        <taxon>Bacillati</taxon>
        <taxon>Mycoplasmatota</taxon>
        <taxon>Mycoplasmoidales</taxon>
        <taxon>Mycoplasmoidaceae</taxon>
        <taxon>Ureaplasma</taxon>
    </lineage>
</organism>
<keyword id="KW-0066">ATP synthesis</keyword>
<keyword id="KW-1003">Cell membrane</keyword>
<keyword id="KW-0139">CF(1)</keyword>
<keyword id="KW-0375">Hydrogen ion transport</keyword>
<keyword id="KW-0406">Ion transport</keyword>
<keyword id="KW-0472">Membrane</keyword>
<keyword id="KW-1185">Reference proteome</keyword>
<keyword id="KW-0813">Transport</keyword>
<proteinExistence type="inferred from homology"/>
<evidence type="ECO:0000255" key="1">
    <source>
        <dbReference type="HAMAP-Rule" id="MF_00815"/>
    </source>
</evidence>
<gene>
    <name evidence="1" type="primary">atpG</name>
    <name type="ordered locus">UU130</name>
</gene>
<sequence>MSLDAMKRKINSVQTTAKITNAMKLVATAKLKRQRDRLAAIKEYCHDYYDVIGLLLSVVDDVEFLKIPNAKDRTLYITINSTMGLAGSYNYNVNKLISKIVNETDITFTIGKKGHDFMRLSGRVDQVNTYLNLNDNDLTFDMSLQIAREALELYSQGEVNKICIIYTKFINAITFEVSVIDVLPFDKTALIKDHLAETIELAKDNIIFKPNKFELVKKILPTYIATVLYGSLIESKISENASRRNAMDAATKNAKALAENYKLIYNTLRQGKITREITEIVAGSDD</sequence>
<comment type="function">
    <text evidence="1">Produces ATP from ADP in the presence of a proton gradient across the membrane. The gamma chain is believed to be important in regulating ATPase activity and the flow of protons through the CF(0) complex.</text>
</comment>
<comment type="subunit">
    <text evidence="1">F-type ATPases have 2 components, CF(1) - the catalytic core - and CF(0) - the membrane proton channel. CF(1) has five subunits: alpha(3), beta(3), gamma(1), delta(1), epsilon(1). CF(0) has three main subunits: a, b and c.</text>
</comment>
<comment type="subcellular location">
    <subcellularLocation>
        <location evidence="1">Cell membrane</location>
        <topology evidence="1">Peripheral membrane protein</topology>
    </subcellularLocation>
</comment>
<comment type="similarity">
    <text evidence="1">Belongs to the ATPase gamma chain family.</text>
</comment>
<accession>Q9PR14</accession>
<feature type="chain" id="PRO_0000073409" description="ATP synthase gamma chain">
    <location>
        <begin position="1"/>
        <end position="286"/>
    </location>
</feature>
<name>ATPG_UREPA</name>
<protein>
    <recommendedName>
        <fullName evidence="1">ATP synthase gamma chain</fullName>
    </recommendedName>
    <alternativeName>
        <fullName evidence="1">ATP synthase F1 sector gamma subunit</fullName>
    </alternativeName>
    <alternativeName>
        <fullName evidence="1">F-ATPase gamma subunit</fullName>
    </alternativeName>
</protein>
<dbReference type="EMBL" id="AF222894">
    <property type="protein sequence ID" value="AAF30536.1"/>
    <property type="molecule type" value="Genomic_DNA"/>
</dbReference>
<dbReference type="RefSeq" id="WP_006688922.1">
    <property type="nucleotide sequence ID" value="NC_002162.1"/>
</dbReference>
<dbReference type="SMR" id="Q9PR14"/>
<dbReference type="STRING" id="273119.UU130"/>
<dbReference type="EnsemblBacteria" id="AAF30536">
    <property type="protein sequence ID" value="AAF30536"/>
    <property type="gene ID" value="UU130"/>
</dbReference>
<dbReference type="GeneID" id="29672729"/>
<dbReference type="KEGG" id="uur:UU130"/>
<dbReference type="eggNOG" id="COG0224">
    <property type="taxonomic scope" value="Bacteria"/>
</dbReference>
<dbReference type="HOGENOM" id="CLU_050669_0_1_14"/>
<dbReference type="OrthoDB" id="9812769at2"/>
<dbReference type="Proteomes" id="UP000000423">
    <property type="component" value="Chromosome"/>
</dbReference>
<dbReference type="GO" id="GO:0005886">
    <property type="term" value="C:plasma membrane"/>
    <property type="evidence" value="ECO:0007669"/>
    <property type="project" value="UniProtKB-SubCell"/>
</dbReference>
<dbReference type="GO" id="GO:0045259">
    <property type="term" value="C:proton-transporting ATP synthase complex"/>
    <property type="evidence" value="ECO:0007669"/>
    <property type="project" value="UniProtKB-KW"/>
</dbReference>
<dbReference type="GO" id="GO:0005524">
    <property type="term" value="F:ATP binding"/>
    <property type="evidence" value="ECO:0007669"/>
    <property type="project" value="UniProtKB-UniRule"/>
</dbReference>
<dbReference type="GO" id="GO:0046933">
    <property type="term" value="F:proton-transporting ATP synthase activity, rotational mechanism"/>
    <property type="evidence" value="ECO:0007669"/>
    <property type="project" value="UniProtKB-UniRule"/>
</dbReference>
<dbReference type="GO" id="GO:0042777">
    <property type="term" value="P:proton motive force-driven plasma membrane ATP synthesis"/>
    <property type="evidence" value="ECO:0007669"/>
    <property type="project" value="UniProtKB-UniRule"/>
</dbReference>
<dbReference type="CDD" id="cd12151">
    <property type="entry name" value="F1-ATPase_gamma"/>
    <property type="match status" value="1"/>
</dbReference>
<dbReference type="Gene3D" id="3.40.1380.10">
    <property type="match status" value="1"/>
</dbReference>
<dbReference type="Gene3D" id="1.10.287.80">
    <property type="entry name" value="ATP synthase, gamma subunit, helix hairpin domain"/>
    <property type="match status" value="1"/>
</dbReference>
<dbReference type="HAMAP" id="MF_00815">
    <property type="entry name" value="ATP_synth_gamma_bact"/>
    <property type="match status" value="1"/>
</dbReference>
<dbReference type="InterPro" id="IPR035968">
    <property type="entry name" value="ATP_synth_F1_ATPase_gsu"/>
</dbReference>
<dbReference type="InterPro" id="IPR000131">
    <property type="entry name" value="ATP_synth_F1_gsu"/>
</dbReference>
<dbReference type="NCBIfam" id="TIGR01146">
    <property type="entry name" value="ATPsyn_F1gamma"/>
    <property type="match status" value="1"/>
</dbReference>
<dbReference type="PANTHER" id="PTHR11693">
    <property type="entry name" value="ATP SYNTHASE GAMMA CHAIN"/>
    <property type="match status" value="1"/>
</dbReference>
<dbReference type="PANTHER" id="PTHR11693:SF22">
    <property type="entry name" value="ATP SYNTHASE SUBUNIT GAMMA, MITOCHONDRIAL"/>
    <property type="match status" value="1"/>
</dbReference>
<dbReference type="Pfam" id="PF00231">
    <property type="entry name" value="ATP-synt"/>
    <property type="match status" value="1"/>
</dbReference>
<dbReference type="PRINTS" id="PR00126">
    <property type="entry name" value="ATPASEGAMMA"/>
</dbReference>
<dbReference type="SUPFAM" id="SSF52943">
    <property type="entry name" value="ATP synthase (F1-ATPase), gamma subunit"/>
    <property type="match status" value="1"/>
</dbReference>